<accession>B2K7G3</accession>
<reference key="1">
    <citation type="submission" date="2008-04" db="EMBL/GenBank/DDBJ databases">
        <title>Complete sequence of Yersinia pseudotuberculosis PB1/+.</title>
        <authorList>
            <person name="Copeland A."/>
            <person name="Lucas S."/>
            <person name="Lapidus A."/>
            <person name="Glavina del Rio T."/>
            <person name="Dalin E."/>
            <person name="Tice H."/>
            <person name="Bruce D."/>
            <person name="Goodwin L."/>
            <person name="Pitluck S."/>
            <person name="Munk A.C."/>
            <person name="Brettin T."/>
            <person name="Detter J.C."/>
            <person name="Han C."/>
            <person name="Tapia R."/>
            <person name="Schmutz J."/>
            <person name="Larimer F."/>
            <person name="Land M."/>
            <person name="Hauser L."/>
            <person name="Challacombe J.F."/>
            <person name="Green L."/>
            <person name="Lindler L.E."/>
            <person name="Nikolich M.P."/>
            <person name="Richardson P."/>
        </authorList>
    </citation>
    <scope>NUCLEOTIDE SEQUENCE [LARGE SCALE GENOMIC DNA]</scope>
    <source>
        <strain>PB1/+</strain>
    </source>
</reference>
<comment type="catalytic activity">
    <reaction evidence="1">
        <text>D-mannitol 1-phosphate + NAD(+) = beta-D-fructose 6-phosphate + NADH + H(+)</text>
        <dbReference type="Rhea" id="RHEA:19661"/>
        <dbReference type="ChEBI" id="CHEBI:15378"/>
        <dbReference type="ChEBI" id="CHEBI:57540"/>
        <dbReference type="ChEBI" id="CHEBI:57634"/>
        <dbReference type="ChEBI" id="CHEBI:57945"/>
        <dbReference type="ChEBI" id="CHEBI:61381"/>
        <dbReference type="EC" id="1.1.1.17"/>
    </reaction>
</comment>
<comment type="similarity">
    <text evidence="1">Belongs to the mannitol dehydrogenase family.</text>
</comment>
<sequence length="387" mass="41992">MKALHFGAGNIGRGFIGKLLADAGAQLTFADVNQPLLDALNKRKSYQVNVVGEQARVEEVKNVSAVNSGSPEVVALIAEADIVTTAVGPQILARIAATVAQGLITRHQQGNTRPLNIIACENMVRGTSQLKQHVFAALSEDEQRWVEQHVGFVDSAVDRIVPPSEAGSTDILAVTVETFSEWIVDGTQFKGQPPEIVGMELTDNLMAFVERKLFTLNTGHAITAYLGQLAGHQTIRDAILDPAVRQTVKGAMEESGAVLIKRYAFDPQKHAAYINKILSRFENPYLHDDVERVGRQPLRKLSAGDRLIKPLLGTLEYQLPHDSLVTGIAAAMSYRSEQDPQAQELVTLLAQLGPKAALAQISDLPADSEVVEQAVSVYNAMQQKLAH</sequence>
<feature type="chain" id="PRO_1000099209" description="Mannitol-1-phosphate 5-dehydrogenase">
    <location>
        <begin position="1"/>
        <end position="387"/>
    </location>
</feature>
<feature type="binding site" evidence="1">
    <location>
        <begin position="3"/>
        <end position="14"/>
    </location>
    <ligand>
        <name>NAD(+)</name>
        <dbReference type="ChEBI" id="CHEBI:57540"/>
    </ligand>
</feature>
<name>MTLD_YERPB</name>
<gene>
    <name evidence="1" type="primary">mtlD</name>
    <name type="ordered locus">YPTS_4139</name>
</gene>
<organism>
    <name type="scientific">Yersinia pseudotuberculosis serotype IB (strain PB1/+)</name>
    <dbReference type="NCBI Taxonomy" id="502801"/>
    <lineage>
        <taxon>Bacteria</taxon>
        <taxon>Pseudomonadati</taxon>
        <taxon>Pseudomonadota</taxon>
        <taxon>Gammaproteobacteria</taxon>
        <taxon>Enterobacterales</taxon>
        <taxon>Yersiniaceae</taxon>
        <taxon>Yersinia</taxon>
    </lineage>
</organism>
<dbReference type="EC" id="1.1.1.17" evidence="1"/>
<dbReference type="EMBL" id="CP001048">
    <property type="protein sequence ID" value="ACC91085.1"/>
    <property type="molecule type" value="Genomic_DNA"/>
</dbReference>
<dbReference type="RefSeq" id="WP_011193338.1">
    <property type="nucleotide sequence ID" value="NZ_CP009780.1"/>
</dbReference>
<dbReference type="SMR" id="B2K7G3"/>
<dbReference type="KEGG" id="ypb:YPTS_4139"/>
<dbReference type="PATRIC" id="fig|502801.10.peg.3612"/>
<dbReference type="GO" id="GO:0005829">
    <property type="term" value="C:cytosol"/>
    <property type="evidence" value="ECO:0007669"/>
    <property type="project" value="TreeGrafter"/>
</dbReference>
<dbReference type="GO" id="GO:0008926">
    <property type="term" value="F:mannitol-1-phosphate 5-dehydrogenase activity"/>
    <property type="evidence" value="ECO:0007669"/>
    <property type="project" value="UniProtKB-UniRule"/>
</dbReference>
<dbReference type="GO" id="GO:0019592">
    <property type="term" value="P:mannitol catabolic process"/>
    <property type="evidence" value="ECO:0007669"/>
    <property type="project" value="TreeGrafter"/>
</dbReference>
<dbReference type="FunFam" id="1.10.1040.10:FF:000009">
    <property type="entry name" value="Mannitol-1-phosphate 5-dehydrogenase"/>
    <property type="match status" value="1"/>
</dbReference>
<dbReference type="FunFam" id="3.40.50.720:FF:000075">
    <property type="entry name" value="Mannitol-1-phosphate 5-dehydrogenase"/>
    <property type="match status" value="1"/>
</dbReference>
<dbReference type="Gene3D" id="1.10.1040.10">
    <property type="entry name" value="N-(1-d-carboxylethyl)-l-norvaline Dehydrogenase, domain 2"/>
    <property type="match status" value="1"/>
</dbReference>
<dbReference type="Gene3D" id="3.40.50.720">
    <property type="entry name" value="NAD(P)-binding Rossmann-like Domain"/>
    <property type="match status" value="1"/>
</dbReference>
<dbReference type="HAMAP" id="MF_00196">
    <property type="entry name" value="Mannitol_dehydrog"/>
    <property type="match status" value="1"/>
</dbReference>
<dbReference type="InterPro" id="IPR008927">
    <property type="entry name" value="6-PGluconate_DH-like_C_sf"/>
</dbReference>
<dbReference type="InterPro" id="IPR013328">
    <property type="entry name" value="6PGD_dom2"/>
</dbReference>
<dbReference type="InterPro" id="IPR023028">
    <property type="entry name" value="Mannitol_1_phos_5_DH"/>
</dbReference>
<dbReference type="InterPro" id="IPR000669">
    <property type="entry name" value="Mannitol_DH"/>
</dbReference>
<dbReference type="InterPro" id="IPR013118">
    <property type="entry name" value="Mannitol_DH_C"/>
</dbReference>
<dbReference type="InterPro" id="IPR023027">
    <property type="entry name" value="Mannitol_DH_CS"/>
</dbReference>
<dbReference type="InterPro" id="IPR013131">
    <property type="entry name" value="Mannitol_DH_N"/>
</dbReference>
<dbReference type="InterPro" id="IPR036291">
    <property type="entry name" value="NAD(P)-bd_dom_sf"/>
</dbReference>
<dbReference type="NCBIfam" id="NF002646">
    <property type="entry name" value="PRK02318.1-2"/>
    <property type="match status" value="1"/>
</dbReference>
<dbReference type="NCBIfam" id="NF002647">
    <property type="entry name" value="PRK02318.1-3"/>
    <property type="match status" value="1"/>
</dbReference>
<dbReference type="NCBIfam" id="NF002650">
    <property type="entry name" value="PRK02318.2-2"/>
    <property type="match status" value="1"/>
</dbReference>
<dbReference type="NCBIfam" id="NF002652">
    <property type="entry name" value="PRK02318.2-5"/>
    <property type="match status" value="1"/>
</dbReference>
<dbReference type="PANTHER" id="PTHR30524:SF0">
    <property type="entry name" value="ALTRONATE OXIDOREDUCTASE-RELATED"/>
    <property type="match status" value="1"/>
</dbReference>
<dbReference type="PANTHER" id="PTHR30524">
    <property type="entry name" value="MANNITOL-1-PHOSPHATE 5-DEHYDROGENASE"/>
    <property type="match status" value="1"/>
</dbReference>
<dbReference type="Pfam" id="PF01232">
    <property type="entry name" value="Mannitol_dh"/>
    <property type="match status" value="1"/>
</dbReference>
<dbReference type="Pfam" id="PF08125">
    <property type="entry name" value="Mannitol_dh_C"/>
    <property type="match status" value="1"/>
</dbReference>
<dbReference type="PRINTS" id="PR00084">
    <property type="entry name" value="MTLDHDRGNASE"/>
</dbReference>
<dbReference type="SUPFAM" id="SSF48179">
    <property type="entry name" value="6-phosphogluconate dehydrogenase C-terminal domain-like"/>
    <property type="match status" value="1"/>
</dbReference>
<dbReference type="SUPFAM" id="SSF51735">
    <property type="entry name" value="NAD(P)-binding Rossmann-fold domains"/>
    <property type="match status" value="1"/>
</dbReference>
<dbReference type="PROSITE" id="PS00974">
    <property type="entry name" value="MANNITOL_DHGENASE"/>
    <property type="match status" value="1"/>
</dbReference>
<keyword id="KW-0520">NAD</keyword>
<keyword id="KW-0560">Oxidoreductase</keyword>
<protein>
    <recommendedName>
        <fullName evidence="1">Mannitol-1-phosphate 5-dehydrogenase</fullName>
        <ecNumber evidence="1">1.1.1.17</ecNumber>
    </recommendedName>
</protein>
<evidence type="ECO:0000255" key="1">
    <source>
        <dbReference type="HAMAP-Rule" id="MF_00196"/>
    </source>
</evidence>
<proteinExistence type="inferred from homology"/>